<dbReference type="EMBL" id="M63532">
    <property type="protein sequence ID" value="AAA43340.1"/>
    <property type="molecule type" value="Genomic_RNA"/>
</dbReference>
<dbReference type="SMR" id="Q89862"/>
<dbReference type="GO" id="GO:0042025">
    <property type="term" value="C:host cell nucleus"/>
    <property type="evidence" value="ECO:0007669"/>
    <property type="project" value="UniProtKB-SubCell"/>
</dbReference>
<dbReference type="GO" id="GO:0016020">
    <property type="term" value="C:membrane"/>
    <property type="evidence" value="ECO:0007669"/>
    <property type="project" value="UniProtKB-KW"/>
</dbReference>
<dbReference type="GO" id="GO:0055036">
    <property type="term" value="C:virion membrane"/>
    <property type="evidence" value="ECO:0007669"/>
    <property type="project" value="UniProtKB-SubCell"/>
</dbReference>
<dbReference type="GO" id="GO:0003723">
    <property type="term" value="F:RNA binding"/>
    <property type="evidence" value="ECO:0007669"/>
    <property type="project" value="UniProtKB-UniRule"/>
</dbReference>
<dbReference type="GO" id="GO:0039660">
    <property type="term" value="F:structural constituent of virion"/>
    <property type="evidence" value="ECO:0007669"/>
    <property type="project" value="UniProtKB-UniRule"/>
</dbReference>
<dbReference type="GO" id="GO:0046761">
    <property type="term" value="P:viral budding from plasma membrane"/>
    <property type="evidence" value="ECO:0007669"/>
    <property type="project" value="UniProtKB-UniRule"/>
</dbReference>
<dbReference type="FunFam" id="1.10.10.180:FF:000001">
    <property type="entry name" value="Matrix protein 1"/>
    <property type="match status" value="1"/>
</dbReference>
<dbReference type="FunFam" id="1.20.91.10:FF:000001">
    <property type="entry name" value="Matrix protein 1"/>
    <property type="match status" value="1"/>
</dbReference>
<dbReference type="Gene3D" id="1.10.10.180">
    <property type="match status" value="1"/>
</dbReference>
<dbReference type="Gene3D" id="1.20.91.10">
    <property type="match status" value="1"/>
</dbReference>
<dbReference type="HAMAP" id="MF_04068">
    <property type="entry name" value="INFV_M1"/>
    <property type="match status" value="1"/>
</dbReference>
<dbReference type="InterPro" id="IPR036039">
    <property type="entry name" value="Flu_matrix_M1"/>
</dbReference>
<dbReference type="InterPro" id="IPR013188">
    <property type="entry name" value="Flu_matrix_M1_C"/>
</dbReference>
<dbReference type="InterPro" id="IPR001561">
    <property type="entry name" value="Flu_matrix_M1_N"/>
</dbReference>
<dbReference type="InterPro" id="IPR015423">
    <property type="entry name" value="Flu_matrix_M1_N_sub1"/>
</dbReference>
<dbReference type="InterPro" id="IPR015799">
    <property type="entry name" value="Flu_matrix_M1_N_sub2"/>
</dbReference>
<dbReference type="InterPro" id="IPR037533">
    <property type="entry name" value="INFV_M1"/>
</dbReference>
<dbReference type="Pfam" id="PF00598">
    <property type="entry name" value="Flu_M1"/>
    <property type="match status" value="1"/>
</dbReference>
<dbReference type="Pfam" id="PF08289">
    <property type="entry name" value="Flu_M1_C"/>
    <property type="match status" value="1"/>
</dbReference>
<dbReference type="SMART" id="SM00759">
    <property type="entry name" value="Flu_M1_C"/>
    <property type="match status" value="1"/>
</dbReference>
<dbReference type="SUPFAM" id="SSF48145">
    <property type="entry name" value="Influenza virus matrix protein M1"/>
    <property type="match status" value="1"/>
</dbReference>
<reference key="1">
    <citation type="journal article" date="1991" name="J. Virol.">
        <title>Evolutionary analysis of the influenza A virus M gene with comparison of the M1 and M2 proteins.</title>
        <authorList>
            <person name="Ito T."/>
            <person name="Gorman O.T."/>
            <person name="Kawaoka Y."/>
            <person name="Bean W.J."/>
            <person name="Webster R.G."/>
        </authorList>
    </citation>
    <scope>NUCLEOTIDE SEQUENCE [GENOMIC RNA]</scope>
</reference>
<organism>
    <name type="scientific">Influenza A virus (strain A/Swine/Tennessee/24/1977 H1N1)</name>
    <dbReference type="NCBI Taxonomy" id="385606"/>
    <lineage>
        <taxon>Viruses</taxon>
        <taxon>Riboviria</taxon>
        <taxon>Orthornavirae</taxon>
        <taxon>Negarnaviricota</taxon>
        <taxon>Polyploviricotina</taxon>
        <taxon>Insthoviricetes</taxon>
        <taxon>Articulavirales</taxon>
        <taxon>Orthomyxoviridae</taxon>
        <taxon>Alphainfluenzavirus</taxon>
        <taxon>Alphainfluenzavirus influenzae</taxon>
        <taxon>Influenza A virus</taxon>
    </lineage>
</organism>
<evidence type="ECO:0000255" key="1">
    <source>
        <dbReference type="HAMAP-Rule" id="MF_04068"/>
    </source>
</evidence>
<accession>Q89862</accession>
<keyword id="KW-0025">Alternative splicing</keyword>
<keyword id="KW-1048">Host nucleus</keyword>
<keyword id="KW-0472">Membrane</keyword>
<keyword id="KW-0694">RNA-binding</keyword>
<keyword id="KW-0468">Viral matrix protein</keyword>
<keyword id="KW-0946">Virion</keyword>
<proteinExistence type="inferred from homology"/>
<protein>
    <recommendedName>
        <fullName evidence="1">Matrix protein 1</fullName>
        <shortName evidence="1">M1</shortName>
    </recommendedName>
</protein>
<gene>
    <name evidence="1" type="primary">M</name>
</gene>
<comment type="function">
    <text evidence="1">Plays critical roles in virus replication, from virus entry and uncoating to assembly and budding of the virus particle. M1 binding to ribonucleocapsids (RNPs) in nucleus seems to inhibit viral transcription. Interaction of viral NEP with M1-RNP is thought to promote nuclear export of the complex, which is targeted to the virion assembly site at the apical plasma membrane in polarized epithelial cells. Interactions with NA and HA may bring M1, a non-raft-associated protein, into lipid rafts. Forms a continuous shell on the inner side of the lipid bilayer in virion, where it binds the RNP. During virus entry into cell, the M2 ion channel acidifies the internal virion core, inducing M1 dissociation from the RNP. M1-free RNPs are transported to the nucleus, where viral transcription and replication can take place.</text>
</comment>
<comment type="function">
    <text evidence="1">Determines the virion's shape: spherical or filamentous. Clinical isolates of influenza are characterized by the presence of significant proportion of filamentous virions, whereas after multiple passage on eggs or cell culture, virions have only spherical morphology. Filamentous virions are thought to be important to infect neighboring cells, and spherical virions more suited to spread through aerosol between hosts organisms.</text>
</comment>
<comment type="subunit">
    <text evidence="1">Homodimer and homomultimer. Interacts with NEP. Binds ribonucleocapsid by both interacting with genomic RNA and NP protein. May interact with HA and NA. Cannot bind NP without genomic RNA.</text>
</comment>
<comment type="subcellular location">
    <subcellularLocation>
        <location evidence="1">Virion membrane</location>
        <topology evidence="1">Peripheral membrane protein</topology>
        <orientation evidence="1">Cytoplasmic side</orientation>
    </subcellularLocation>
    <subcellularLocation>
        <location evidence="1">Host nucleus</location>
    </subcellularLocation>
</comment>
<comment type="alternative products">
    <event type="alternative splicing"/>
    <isoform>
        <id>Q89862-1</id>
        <name>M1</name>
        <sequence type="displayed"/>
    </isoform>
    <isoform>
        <id>Q67205-1</id>
        <name>M2</name>
        <sequence type="external"/>
    </isoform>
    <text>Only the first 9 residues are shared by the 2 isoforms.</text>
</comment>
<comment type="miscellaneous">
    <text evidence="1">Most abundant protein in virion. When expressed alone can form virus-like particles in transfected cells.</text>
</comment>
<comment type="similarity">
    <text evidence="1">Belongs to the influenza viruses Matrix protein M1 family.</text>
</comment>
<sequence length="252" mass="27880">MSLLTEVETYVLSIVPSGPLKAEIAQRLEDVFAGKNTDLEALMEWLKTRPILSPLTKGILGFVFTLTVPSERGLQRRRFVQNALNGNGDPNNMDKAVKLYRKLKREITFHGAKEVALSYSAGALASCMGLIYNRMGTVTTEVAFGLVCATCEQIADSQHRSHRQMVTTTNPLIRHENRMVLASTTAKAMEQMAGSSEQAAEAMEVASQARQMVQAMRTIGTHPSSSAGLKDDLLENLQAYQKRMGVQMQRFR</sequence>
<name>M1_I77AC</name>
<feature type="chain" id="PRO_0000326300" description="Matrix protein 1">
    <location>
        <begin position="1"/>
        <end position="252"/>
    </location>
</feature>
<feature type="region of interest" description="Membrane-binding" evidence="1">
    <location>
        <begin position="1"/>
        <end position="164"/>
    </location>
</feature>
<feature type="region of interest" description="RNP-binding" evidence="1">
    <location>
        <begin position="165"/>
        <end position="252"/>
    </location>
</feature>
<feature type="short sequence motif" description="Nuclear localization signal" evidence="1">
    <location>
        <begin position="101"/>
        <end position="105"/>
    </location>
</feature>
<organismHost>
    <name type="scientific">Aves</name>
    <dbReference type="NCBI Taxonomy" id="8782"/>
</organismHost>
<organismHost>
    <name type="scientific">Homo sapiens</name>
    <name type="common">Human</name>
    <dbReference type="NCBI Taxonomy" id="9606"/>
</organismHost>
<organismHost>
    <name type="scientific">Sus scrofa</name>
    <name type="common">Pig</name>
    <dbReference type="NCBI Taxonomy" id="9823"/>
</organismHost>